<dbReference type="EMBL" id="CR858462">
    <property type="protein sequence ID" value="CAH90690.1"/>
    <property type="molecule type" value="mRNA"/>
</dbReference>
<dbReference type="RefSeq" id="NP_001127322.1">
    <property type="nucleotide sequence ID" value="NM_001133850.1"/>
</dbReference>
<dbReference type="RefSeq" id="XP_054415053.1">
    <property type="nucleotide sequence ID" value="XM_054559078.1"/>
</dbReference>
<dbReference type="SMR" id="Q5RC20"/>
<dbReference type="FunCoup" id="Q5RC20">
    <property type="interactions" value="2740"/>
</dbReference>
<dbReference type="STRING" id="9601.ENSPPYP00000019583"/>
<dbReference type="GeneID" id="100174383"/>
<dbReference type="KEGG" id="pon:100174383"/>
<dbReference type="CTD" id="7532"/>
<dbReference type="eggNOG" id="KOG0841">
    <property type="taxonomic scope" value="Eukaryota"/>
</dbReference>
<dbReference type="HOGENOM" id="CLU_058290_0_0_1"/>
<dbReference type="InParanoid" id="Q5RC20"/>
<dbReference type="OrthoDB" id="10260625at2759"/>
<dbReference type="TreeFam" id="TF102003"/>
<dbReference type="Proteomes" id="UP000001595">
    <property type="component" value="Chromosome 7"/>
</dbReference>
<dbReference type="GO" id="GO:0005737">
    <property type="term" value="C:cytoplasm"/>
    <property type="evidence" value="ECO:0000250"/>
    <property type="project" value="UniProtKB"/>
</dbReference>
<dbReference type="GO" id="GO:0005829">
    <property type="term" value="C:cytosol"/>
    <property type="evidence" value="ECO:0007669"/>
    <property type="project" value="UniProtKB-SubCell"/>
</dbReference>
<dbReference type="GO" id="GO:0005759">
    <property type="term" value="C:mitochondrial matrix"/>
    <property type="evidence" value="ECO:0007669"/>
    <property type="project" value="UniProtKB-SubCell"/>
</dbReference>
<dbReference type="GO" id="GO:0042802">
    <property type="term" value="F:identical protein binding"/>
    <property type="evidence" value="ECO:0007669"/>
    <property type="project" value="UniProtKB-ARBA"/>
</dbReference>
<dbReference type="GO" id="GO:0140031">
    <property type="term" value="F:phosphorylation-dependent protein binding"/>
    <property type="evidence" value="ECO:0000250"/>
    <property type="project" value="UniProtKB"/>
</dbReference>
<dbReference type="GO" id="GO:0140311">
    <property type="term" value="F:protein sequestering activity"/>
    <property type="evidence" value="ECO:0000250"/>
    <property type="project" value="UniProtKB"/>
</dbReference>
<dbReference type="GO" id="GO:0022409">
    <property type="term" value="P:positive regulation of cell-cell adhesion"/>
    <property type="evidence" value="ECO:0000250"/>
    <property type="project" value="UniProtKB"/>
</dbReference>
<dbReference type="GO" id="GO:0032880">
    <property type="term" value="P:regulation of protein localization"/>
    <property type="evidence" value="ECO:0000250"/>
    <property type="project" value="UniProtKB"/>
</dbReference>
<dbReference type="CDD" id="cd10024">
    <property type="entry name" value="14-3-3_gamma"/>
    <property type="match status" value="1"/>
</dbReference>
<dbReference type="FunFam" id="1.20.190.20:FF:000001">
    <property type="entry name" value="14-3-3 gamma 1"/>
    <property type="match status" value="1"/>
</dbReference>
<dbReference type="Gene3D" id="1.20.190.20">
    <property type="entry name" value="14-3-3 domain"/>
    <property type="match status" value="1"/>
</dbReference>
<dbReference type="InterPro" id="IPR000308">
    <property type="entry name" value="14-3-3"/>
</dbReference>
<dbReference type="InterPro" id="IPR023409">
    <property type="entry name" value="14-3-3_CS"/>
</dbReference>
<dbReference type="InterPro" id="IPR036815">
    <property type="entry name" value="14-3-3_dom_sf"/>
</dbReference>
<dbReference type="InterPro" id="IPR023410">
    <property type="entry name" value="14-3-3_domain"/>
</dbReference>
<dbReference type="PANTHER" id="PTHR18860">
    <property type="entry name" value="14-3-3 PROTEIN"/>
    <property type="match status" value="1"/>
</dbReference>
<dbReference type="Pfam" id="PF00244">
    <property type="entry name" value="14-3-3"/>
    <property type="match status" value="1"/>
</dbReference>
<dbReference type="PIRSF" id="PIRSF000868">
    <property type="entry name" value="14-3-3"/>
    <property type="match status" value="1"/>
</dbReference>
<dbReference type="PRINTS" id="PR00305">
    <property type="entry name" value="1433ZETA"/>
</dbReference>
<dbReference type="SMART" id="SM00101">
    <property type="entry name" value="14_3_3"/>
    <property type="match status" value="1"/>
</dbReference>
<dbReference type="SUPFAM" id="SSF48445">
    <property type="entry name" value="14-3-3 protein"/>
    <property type="match status" value="1"/>
</dbReference>
<dbReference type="PROSITE" id="PS00796">
    <property type="entry name" value="1433_1"/>
    <property type="match status" value="1"/>
</dbReference>
<dbReference type="PROSITE" id="PS00797">
    <property type="entry name" value="1433_2"/>
    <property type="match status" value="1"/>
</dbReference>
<accession>Q5RC20</accession>
<organism>
    <name type="scientific">Pongo abelii</name>
    <name type="common">Sumatran orangutan</name>
    <name type="synonym">Pongo pygmaeus abelii</name>
    <dbReference type="NCBI Taxonomy" id="9601"/>
    <lineage>
        <taxon>Eukaryota</taxon>
        <taxon>Metazoa</taxon>
        <taxon>Chordata</taxon>
        <taxon>Craniata</taxon>
        <taxon>Vertebrata</taxon>
        <taxon>Euteleostomi</taxon>
        <taxon>Mammalia</taxon>
        <taxon>Eutheria</taxon>
        <taxon>Euarchontoglires</taxon>
        <taxon>Primates</taxon>
        <taxon>Haplorrhini</taxon>
        <taxon>Catarrhini</taxon>
        <taxon>Hominidae</taxon>
        <taxon>Pongo</taxon>
    </lineage>
</organism>
<comment type="function">
    <text evidence="1">Adapter protein implicated in the regulation of a large spectrum of both general and specialized signaling pathways. Binds to a large number of partners, usually by recognition of a phosphoserine or phosphothreonine motif. Binding generally results in the modulation of the activity of the binding partner. Promotes inactivation of WDR24 component of the GATOR2 complex by binding to phosphorylated WDR24. Participates in the positive regulation of NMDA glutamate receptor activity by promoting the L-glutamate secretion through interaction with BEST1. Reduces keratinocyte intercellular adhesion, via interacting with PKP1 and sequestering it in the cytoplasm, thereby reducing its incorporation into desmosomes. Plays a role in mitochondrial protein catabolic process (also named MALM) that promotes the degradation of damaged proteins inside mitochondria (By similarity).</text>
</comment>
<comment type="subunit">
    <text evidence="1 2 3">Homodimer (By similarity). Part of a complex that contains DSG3, PKP1, YAP1 and YWHAG; the complex is required for localization of DSG3 and YAP1 to the cell membrane in keratinocytes (By similarity). Interacts with SAMSN1 (By similarity). Interacts with RAF1, SSH1 and CRTC2/TORC2 (By similarity). Interacts with ABL1 (phosphorylated form); the interaction retains it in the cytoplasm (By similarity). Interacts with GAB2 (By similarity). Interacts with MDM4 (phosphorylated); negatively regulates MDM4 activity toward TP53 (By similarity). Interacts with PKA-phosphorylated AANAT and SIRT2 (By similarity). Interacts with the 'Thr-369' phosphorylated form of DAPK2 (By similarity). Interacts with PI4KB, TBC1D22A and TBC1D22B (By similarity). Interacts with SLITRK1 (By similarity). Interacts with LRRK2; this interaction is dependent on LRRK2 phosphorylation (By similarity). Interacts with MARK2 and MARK3 (By similarity). Interacts with MEFV (By similarity). Interacts with ENDOG, TSC2 and PIK3C3; interaction with ENDOG weakens its interaction with TSC2 and PIK3C3 (By similarity). Interacts with (phosphorylated) WDR24 (By similarity). Interacts with BEST1; this interaction promotes L-glutamate channel activity leading to the positive regulation of NMDA glutamate receptor activity through the L-glutamate secretion (By similarity). Interacts with PKP1 (when phosphorylated); the interaction results in translocation of PKP1 to the cytoplasm and loss of intercellular adhesion in keratinocytes (By similarity). Interacts with SPATA18/MIEAP; a protein that also plays a role in MALM (By similarity).</text>
</comment>
<comment type="subcellular location">
    <subcellularLocation>
        <location evidence="1">Cytoplasm</location>
        <location evidence="1">Cytosol</location>
    </subcellularLocation>
    <subcellularLocation>
        <location evidence="1">Mitochondrion matrix</location>
    </subcellularLocation>
    <text evidence="1">Translocates to the mitochondrial matrix following induction of MALM (mitochondrial protein catabolic process).</text>
</comment>
<comment type="PTM">
    <text evidence="1">Phosphorylated by various PKC isozymes.</text>
</comment>
<comment type="similarity">
    <text evidence="4">Belongs to the 14-3-3 family.</text>
</comment>
<name>1433G_PONAB</name>
<proteinExistence type="evidence at transcript level"/>
<evidence type="ECO:0000250" key="1">
    <source>
        <dbReference type="UniProtKB" id="P61981"/>
    </source>
</evidence>
<evidence type="ECO:0000250" key="2">
    <source>
        <dbReference type="UniProtKB" id="P61982"/>
    </source>
</evidence>
<evidence type="ECO:0000250" key="3">
    <source>
        <dbReference type="UniProtKB" id="P61983"/>
    </source>
</evidence>
<evidence type="ECO:0000305" key="4"/>
<reference key="1">
    <citation type="submission" date="2004-11" db="EMBL/GenBank/DDBJ databases">
        <authorList>
            <consortium name="The German cDNA consortium"/>
        </authorList>
    </citation>
    <scope>NUCLEOTIDE SEQUENCE [LARGE SCALE MRNA]</scope>
    <source>
        <tissue>Heart</tissue>
    </source>
</reference>
<sequence length="247" mass="28303">MVDREQLVQKARLAEQAERYDDMAAAMKNVTELNEPLSNEERNLLSVAYKNVVGARRSSWRVISSIEQKTSADGNEKKIEMVRAYREKIEKELEAVCQDVLSLLDNYLIKNCSETQYESKVFYLKMKGDYYRYLAEVATGEKRATVVESSEKAYSEAHEISKEHMQPTHPIRLGLALNYSVFYYEIQNAPEQACHLAKTAFDDAIAELDTLNEDSYKDSTLIMQLLRDNLTLWTSDQQDDDGGEGNN</sequence>
<protein>
    <recommendedName>
        <fullName evidence="1">14-3-3 protein gamma</fullName>
    </recommendedName>
    <component>
        <recommendedName>
            <fullName>14-3-3 protein gamma, N-terminally processed</fullName>
        </recommendedName>
    </component>
</protein>
<gene>
    <name evidence="1" type="primary">YWHAG</name>
</gene>
<keyword id="KW-0007">Acetylation</keyword>
<keyword id="KW-0963">Cytoplasm</keyword>
<keyword id="KW-0496">Mitochondrion</keyword>
<keyword id="KW-0597">Phosphoprotein</keyword>
<keyword id="KW-1185">Reference proteome</keyword>
<feature type="chain" id="PRO_0000058608" description="14-3-3 protein gamma">
    <location>
        <begin position="1"/>
        <end position="247"/>
    </location>
</feature>
<feature type="initiator methionine" description="Removed; alternate" evidence="1">
    <location>
        <position position="1"/>
    </location>
</feature>
<feature type="chain" id="PRO_0000367909" description="14-3-3 protein gamma, N-terminally processed">
    <location>
        <begin position="2"/>
        <end position="247"/>
    </location>
</feature>
<feature type="region of interest" description="Interaction with SPATA18/MIEAP" evidence="1">
    <location>
        <begin position="2"/>
        <end position="247"/>
    </location>
</feature>
<feature type="site" description="Interaction with phosphoserine on interacting protein" evidence="1">
    <location>
        <position position="57"/>
    </location>
</feature>
<feature type="site" description="Interaction with phosphoserine on interacting protein" evidence="1">
    <location>
        <position position="132"/>
    </location>
</feature>
<feature type="modified residue" description="N-acetylmethionine" evidence="1">
    <location>
        <position position="1"/>
    </location>
</feature>
<feature type="modified residue" description="N-acetylvaline; in 14-3-3 protein gamma, N-terminally processed" evidence="1">
    <location>
        <position position="2"/>
    </location>
</feature>
<feature type="modified residue" description="Phosphoserine" evidence="1">
    <location>
        <position position="71"/>
    </location>
</feature>
<feature type="modified residue" description="Phosphotyrosine" evidence="3">
    <location>
        <position position="133"/>
    </location>
</feature>
<feature type="modified residue" description="Phosphothreonine" evidence="1">
    <location>
        <position position="145"/>
    </location>
</feature>
<feature type="modified residue" description="Phosphoserine" evidence="3">
    <location>
        <position position="215"/>
    </location>
</feature>
<feature type="modified residue" description="Phosphothreonine" evidence="1">
    <location>
        <position position="234"/>
    </location>
</feature>
<feature type="modified residue" description="Phosphoserine" evidence="1">
    <location>
        <position position="235"/>
    </location>
</feature>